<keyword id="KW-0963">Cytoplasm</keyword>
<keyword id="KW-0274">FAD</keyword>
<keyword id="KW-0285">Flavoprotein</keyword>
<keyword id="KW-0520">NAD</keyword>
<keyword id="KW-0521">NADP</keyword>
<keyword id="KW-0560">Oxidoreductase</keyword>
<keyword id="KW-1185">Reference proteome</keyword>
<dbReference type="EC" id="1.6.1.1" evidence="1"/>
<dbReference type="EMBL" id="BX571874">
    <property type="protein sequence ID" value="CAE17111.1"/>
    <property type="molecule type" value="Genomic_DNA"/>
</dbReference>
<dbReference type="RefSeq" id="WP_011148807.1">
    <property type="nucleotide sequence ID" value="NC_005126.1"/>
</dbReference>
<dbReference type="SMR" id="Q7MBG9"/>
<dbReference type="STRING" id="243265.plu4739"/>
<dbReference type="GeneID" id="48850974"/>
<dbReference type="KEGG" id="plu:plu4739"/>
<dbReference type="eggNOG" id="COG1249">
    <property type="taxonomic scope" value="Bacteria"/>
</dbReference>
<dbReference type="HOGENOM" id="CLU_016755_0_0_6"/>
<dbReference type="OrthoDB" id="9800167at2"/>
<dbReference type="Proteomes" id="UP000002514">
    <property type="component" value="Chromosome"/>
</dbReference>
<dbReference type="GO" id="GO:0005829">
    <property type="term" value="C:cytosol"/>
    <property type="evidence" value="ECO:0007669"/>
    <property type="project" value="TreeGrafter"/>
</dbReference>
<dbReference type="GO" id="GO:0004148">
    <property type="term" value="F:dihydrolipoyl dehydrogenase (NADH) activity"/>
    <property type="evidence" value="ECO:0007669"/>
    <property type="project" value="TreeGrafter"/>
</dbReference>
<dbReference type="GO" id="GO:0050660">
    <property type="term" value="F:flavin adenine dinucleotide binding"/>
    <property type="evidence" value="ECO:0007669"/>
    <property type="project" value="TreeGrafter"/>
</dbReference>
<dbReference type="GO" id="GO:0003957">
    <property type="term" value="F:NAD(P)+ transhydrogenase (Si-specific) activity"/>
    <property type="evidence" value="ECO:0007669"/>
    <property type="project" value="UniProtKB-UniRule"/>
</dbReference>
<dbReference type="GO" id="GO:0006103">
    <property type="term" value="P:2-oxoglutarate metabolic process"/>
    <property type="evidence" value="ECO:0007669"/>
    <property type="project" value="TreeGrafter"/>
</dbReference>
<dbReference type="GO" id="GO:0006739">
    <property type="term" value="P:NADP metabolic process"/>
    <property type="evidence" value="ECO:0007669"/>
    <property type="project" value="UniProtKB-UniRule"/>
</dbReference>
<dbReference type="FunFam" id="3.30.390.30:FF:000002">
    <property type="entry name" value="Soluble pyridine nucleotide transhydrogenase"/>
    <property type="match status" value="1"/>
</dbReference>
<dbReference type="FunFam" id="3.50.50.60:FF:000008">
    <property type="entry name" value="Soluble pyridine nucleotide transhydrogenase"/>
    <property type="match status" value="1"/>
</dbReference>
<dbReference type="Gene3D" id="3.30.390.30">
    <property type="match status" value="1"/>
</dbReference>
<dbReference type="Gene3D" id="3.50.50.60">
    <property type="entry name" value="FAD/NAD(P)-binding domain"/>
    <property type="match status" value="2"/>
</dbReference>
<dbReference type="HAMAP" id="MF_00247">
    <property type="entry name" value="SthA"/>
    <property type="match status" value="1"/>
</dbReference>
<dbReference type="InterPro" id="IPR050151">
    <property type="entry name" value="Class-I_Pyr_Nuc-Dis_Oxidored"/>
</dbReference>
<dbReference type="InterPro" id="IPR036188">
    <property type="entry name" value="FAD/NAD-bd_sf"/>
</dbReference>
<dbReference type="InterPro" id="IPR023753">
    <property type="entry name" value="FAD/NAD-binding_dom"/>
</dbReference>
<dbReference type="InterPro" id="IPR016156">
    <property type="entry name" value="FAD/NAD-linked_Rdtase_dimer_sf"/>
</dbReference>
<dbReference type="InterPro" id="IPR001100">
    <property type="entry name" value="Pyr_nuc-diS_OxRdtase"/>
</dbReference>
<dbReference type="InterPro" id="IPR004099">
    <property type="entry name" value="Pyr_nucl-diS_OxRdtase_dimer"/>
</dbReference>
<dbReference type="InterPro" id="IPR022962">
    <property type="entry name" value="STH_gammaproteobact"/>
</dbReference>
<dbReference type="NCBIfam" id="NF003585">
    <property type="entry name" value="PRK05249.1"/>
    <property type="match status" value="1"/>
</dbReference>
<dbReference type="PANTHER" id="PTHR22912">
    <property type="entry name" value="DISULFIDE OXIDOREDUCTASE"/>
    <property type="match status" value="1"/>
</dbReference>
<dbReference type="PANTHER" id="PTHR22912:SF93">
    <property type="entry name" value="SOLUBLE PYRIDINE NUCLEOTIDE TRANSHYDROGENASE"/>
    <property type="match status" value="1"/>
</dbReference>
<dbReference type="Pfam" id="PF07992">
    <property type="entry name" value="Pyr_redox_2"/>
    <property type="match status" value="1"/>
</dbReference>
<dbReference type="Pfam" id="PF02852">
    <property type="entry name" value="Pyr_redox_dim"/>
    <property type="match status" value="1"/>
</dbReference>
<dbReference type="PIRSF" id="PIRSF000350">
    <property type="entry name" value="Mercury_reductase_MerA"/>
    <property type="match status" value="1"/>
</dbReference>
<dbReference type="PRINTS" id="PR00368">
    <property type="entry name" value="FADPNR"/>
</dbReference>
<dbReference type="PRINTS" id="PR00411">
    <property type="entry name" value="PNDRDTASEI"/>
</dbReference>
<dbReference type="SUPFAM" id="SSF51905">
    <property type="entry name" value="FAD/NAD(P)-binding domain"/>
    <property type="match status" value="1"/>
</dbReference>
<dbReference type="SUPFAM" id="SSF55424">
    <property type="entry name" value="FAD/NAD-linked reductases, dimerisation (C-terminal) domain"/>
    <property type="match status" value="1"/>
</dbReference>
<evidence type="ECO:0000255" key="1">
    <source>
        <dbReference type="HAMAP-Rule" id="MF_00247"/>
    </source>
</evidence>
<comment type="function">
    <text evidence="1">Conversion of NADPH, generated by peripheral catabolic pathways, to NADH, which can enter the respiratory chain for energy generation.</text>
</comment>
<comment type="catalytic activity">
    <reaction evidence="1">
        <text>NAD(+) + NADPH = NADH + NADP(+)</text>
        <dbReference type="Rhea" id="RHEA:11692"/>
        <dbReference type="ChEBI" id="CHEBI:57540"/>
        <dbReference type="ChEBI" id="CHEBI:57783"/>
        <dbReference type="ChEBI" id="CHEBI:57945"/>
        <dbReference type="ChEBI" id="CHEBI:58349"/>
        <dbReference type="EC" id="1.6.1.1"/>
    </reaction>
</comment>
<comment type="cofactor">
    <cofactor evidence="1">
        <name>FAD</name>
        <dbReference type="ChEBI" id="CHEBI:57692"/>
    </cofactor>
    <text evidence="1">Binds 1 FAD per subunit.</text>
</comment>
<comment type="subcellular location">
    <subcellularLocation>
        <location evidence="1">Cytoplasm</location>
    </subcellularLocation>
</comment>
<comment type="similarity">
    <text evidence="1">Belongs to the class-I pyridine nucleotide-disulfide oxidoreductase family.</text>
</comment>
<sequence>MQHIHFDAIVIGSGPGGEGAAMGLVKQGKSVAVIERYNNVGGGCTHWGTIPSKALRHAVSRIIEFNQNPLYSDNSRVLRSSFAEILRRAEMVINQQTRMRQGFYERNGCRMFSGEATFIDDHRVSVRYADDNHDILSADKIIIATGSRPYCPPDVDFTHSRIYNSDSILKLDHEPRHVIIYGAGVIGCEYASIFRGLGVKVDLINTRNHLLAFLDQEMSDALSYHFWNSGIVIRHNEEYSKIEGVDDGVIVHLKSGKKVKADCLLYANGRTGNTDTLGLKNVGLEADSRGLLKVNKIYQTSNENIYAVGDVIGYPSLASAAYDQGRIAAQAMTKGNAEVHLIEDIPTGIYTIPEISSVGKTEQQLTAMKVPYEVGRAQFKHLARAQIAGMNVGSLKILFHRETKEILGIHCFGERAAEIIHIGQAIMEQKGESNTIEYFVNTTFNYPTMAEAYRVAALNGLNRLF</sequence>
<name>STHA_PHOLL</name>
<protein>
    <recommendedName>
        <fullName evidence="1">Soluble pyridine nucleotide transhydrogenase</fullName>
        <shortName evidence="1">STH</shortName>
        <ecNumber evidence="1">1.6.1.1</ecNumber>
    </recommendedName>
    <alternativeName>
        <fullName evidence="1">NAD(P)(+) transhydrogenase [B-specific]</fullName>
    </alternativeName>
</protein>
<reference key="1">
    <citation type="journal article" date="2003" name="Nat. Biotechnol.">
        <title>The genome sequence of the entomopathogenic bacterium Photorhabdus luminescens.</title>
        <authorList>
            <person name="Duchaud E."/>
            <person name="Rusniok C."/>
            <person name="Frangeul L."/>
            <person name="Buchrieser C."/>
            <person name="Givaudan A."/>
            <person name="Taourit S."/>
            <person name="Bocs S."/>
            <person name="Boursaux-Eude C."/>
            <person name="Chandler M."/>
            <person name="Charles J.-F."/>
            <person name="Dassa E."/>
            <person name="Derose R."/>
            <person name="Derzelle S."/>
            <person name="Freyssinet G."/>
            <person name="Gaudriault S."/>
            <person name="Medigue C."/>
            <person name="Lanois A."/>
            <person name="Powell K."/>
            <person name="Siguier P."/>
            <person name="Vincent R."/>
            <person name="Wingate V."/>
            <person name="Zouine M."/>
            <person name="Glaser P."/>
            <person name="Boemare N."/>
            <person name="Danchin A."/>
            <person name="Kunst F."/>
        </authorList>
    </citation>
    <scope>NUCLEOTIDE SEQUENCE [LARGE SCALE GENOMIC DNA]</scope>
    <source>
        <strain>DSM 15139 / CIP 105565 / TT01</strain>
    </source>
</reference>
<accession>Q7MBG9</accession>
<feature type="chain" id="PRO_0000068067" description="Soluble pyridine nucleotide transhydrogenase">
    <location>
        <begin position="1"/>
        <end position="465"/>
    </location>
</feature>
<feature type="binding site" evidence="1">
    <location>
        <begin position="35"/>
        <end position="44"/>
    </location>
    <ligand>
        <name>FAD</name>
        <dbReference type="ChEBI" id="CHEBI:57692"/>
    </ligand>
</feature>
<organism>
    <name type="scientific">Photorhabdus laumondii subsp. laumondii (strain DSM 15139 / CIP 105565 / TT01)</name>
    <name type="common">Photorhabdus luminescens subsp. laumondii</name>
    <dbReference type="NCBI Taxonomy" id="243265"/>
    <lineage>
        <taxon>Bacteria</taxon>
        <taxon>Pseudomonadati</taxon>
        <taxon>Pseudomonadota</taxon>
        <taxon>Gammaproteobacteria</taxon>
        <taxon>Enterobacterales</taxon>
        <taxon>Morganellaceae</taxon>
        <taxon>Photorhabdus</taxon>
    </lineage>
</organism>
<proteinExistence type="inferred from homology"/>
<gene>
    <name evidence="1" type="primary">sthA</name>
    <name evidence="1" type="synonym">udhA</name>
    <name type="ordered locus">plu4739</name>
</gene>